<feature type="chain" id="PRO_0000197554" description="Transposase B from transposon Tn554">
    <location>
        <begin position="1"/>
        <end position="630"/>
    </location>
</feature>
<feature type="domain" description="Core-binding (CB)" evidence="3">
    <location>
        <begin position="216"/>
        <end position="302"/>
    </location>
</feature>
<feature type="domain" description="Tyr recombinase" evidence="2">
    <location>
        <begin position="326"/>
        <end position="513"/>
    </location>
</feature>
<feature type="active site" evidence="2">
    <location>
        <position position="363"/>
    </location>
</feature>
<feature type="active site" evidence="2">
    <location>
        <position position="391"/>
    </location>
</feature>
<feature type="active site" evidence="2">
    <location>
        <position position="465"/>
    </location>
</feature>
<feature type="active site" evidence="2">
    <location>
        <position position="468"/>
    </location>
</feature>
<feature type="active site" evidence="2">
    <location>
        <position position="491"/>
    </location>
</feature>
<feature type="active site" description="O-(3'-phospho-DNA)-tyrosine intermediate" evidence="2">
    <location>
        <position position="500"/>
    </location>
</feature>
<proteinExistence type="inferred from homology"/>
<accession>P0A054</accession>
<accession>P06697</accession>
<name>TNPB_STAAN</name>
<keyword id="KW-0229">DNA integration</keyword>
<keyword id="KW-0233">DNA recombination</keyword>
<keyword id="KW-0238">DNA-binding</keyword>
<keyword id="KW-0814">Transposable element</keyword>
<reference key="1">
    <citation type="journal article" date="1999" name="Antimicrob. Agents Chemother.">
        <title>Cloning and nucleotide sequence determination of the entire mec DNA of pre-methicillin-resistant Staphylococcus aureus N315.</title>
        <authorList>
            <person name="Ito T."/>
            <person name="Katayama Y."/>
            <person name="Hiramatsu K."/>
        </authorList>
    </citation>
    <scope>NUCLEOTIDE SEQUENCE [GENOMIC DNA]</scope>
</reference>
<reference key="2">
    <citation type="journal article" date="2001" name="Lancet">
        <title>Whole genome sequencing of meticillin-resistant Staphylococcus aureus.</title>
        <authorList>
            <person name="Kuroda M."/>
            <person name="Ohta T."/>
            <person name="Uchiyama I."/>
            <person name="Baba T."/>
            <person name="Yuzawa H."/>
            <person name="Kobayashi I."/>
            <person name="Cui L."/>
            <person name="Oguchi A."/>
            <person name="Aoki K."/>
            <person name="Nagai Y."/>
            <person name="Lian J.-Q."/>
            <person name="Ito T."/>
            <person name="Kanamori M."/>
            <person name="Matsumaru H."/>
            <person name="Maruyama A."/>
            <person name="Murakami H."/>
            <person name="Hosoyama A."/>
            <person name="Mizutani-Ui Y."/>
            <person name="Takahashi N.K."/>
            <person name="Sawano T."/>
            <person name="Inoue R."/>
            <person name="Kaito C."/>
            <person name="Sekimizu K."/>
            <person name="Hirakawa H."/>
            <person name="Kuhara S."/>
            <person name="Goto S."/>
            <person name="Yabuzaki J."/>
            <person name="Kanehisa M."/>
            <person name="Yamashita A."/>
            <person name="Oshima K."/>
            <person name="Furuya K."/>
            <person name="Yoshino C."/>
            <person name="Shiba T."/>
            <person name="Hattori M."/>
            <person name="Ogasawara N."/>
            <person name="Hayashi H."/>
            <person name="Hiramatsu K."/>
        </authorList>
    </citation>
    <scope>NUCLEOTIDE SEQUENCE [LARGE SCALE GENOMIC DNA]</scope>
    <source>
        <strain>N315</strain>
    </source>
</reference>
<sequence>MNASSKRKIISQSEISKKIAVMNEEMQGFWANNSWDIRKCPHPSAIELSKNPALRNRWVRFERVKNLWLRTELKYFYFYHLNNGIWNAKTVWIRKGTVINKMLDFLDLKYPSITSITEVPIEKAMTEYRTYLTKRGVRITTTNYKITANQEKTPVKANSYYVTNLKQFMEFYENFYFDGEEWDKDVWDRRNLPLPDDKVNPTQYEYTINFKGFRNTYFKQLVKRYCKLRLNVDSFSYVSDIAQRLKEFFNFLDMKFKQVQRVHQLTRVEIEAYLSELNMMGIKPSTITGRISILEGLFSTLLRLEWDDVPSKILIYSEDYPKIPRAKPRFIDEFVLEQLNSHLDKLPEYIATMTMIVQECGMRISELCTLKKGCLLEDKDGDFFLKYYQWKMKKEHIVPISKEVALLIKVREDKVSEEFPDSEYLFPRKDGSPLKQETFRGELNKLAYEQNIVDKSGEIYRFHAHAFRHTVGTRMINNGMPQHIVQKFLGHESPEMTSRYAHIFDETLKNEFTKFQEKLVTNNGDVLDLDEDNEVDDVELQWFKKNINAQVLPNGYCRLPVVAGGCPHANACLDCTHFCTSKQFLPQHEEQLERTEELLAIAKDKQWQRQVETNSRVKERLEQIIGSLTG</sequence>
<organism>
    <name type="scientific">Staphylococcus aureus (strain N315)</name>
    <dbReference type="NCBI Taxonomy" id="158879"/>
    <lineage>
        <taxon>Bacteria</taxon>
        <taxon>Bacillati</taxon>
        <taxon>Bacillota</taxon>
        <taxon>Bacilli</taxon>
        <taxon>Bacillales</taxon>
        <taxon>Staphylococcaceae</taxon>
        <taxon>Staphylococcus</taxon>
    </lineage>
</organism>
<gene>
    <name type="primary">tnpB1</name>
    <name type="ordered locus">SA0051</name>
</gene>
<gene>
    <name type="primary">tnpB2</name>
    <name type="ordered locus">SA1483</name>
</gene>
<gene>
    <name type="primary">tnpB3</name>
    <name type="ordered locus">SA0763</name>
</gene>
<gene>
    <name type="primary">tnpB4</name>
    <name type="ordered locus">SA1954</name>
</gene>
<gene>
    <name type="primary">tnpB5</name>
    <name type="ordered locus">SA2387</name>
</gene>
<dbReference type="EMBL" id="D86934">
    <property type="protein sequence ID" value="BAA82202.1"/>
    <property type="molecule type" value="Genomic_DNA"/>
</dbReference>
<dbReference type="EMBL" id="BA000018">
    <property type="protein sequence ID" value="BAB41269.1"/>
    <property type="molecule type" value="Genomic_DNA"/>
</dbReference>
<dbReference type="EMBL" id="BA000018">
    <property type="protein sequence ID" value="BAB42000.1"/>
    <property type="molecule type" value="Genomic_DNA"/>
</dbReference>
<dbReference type="EMBL" id="BA000018">
    <property type="protein sequence ID" value="BAB42749.1"/>
    <property type="molecule type" value="Genomic_DNA"/>
</dbReference>
<dbReference type="EMBL" id="BA000018">
    <property type="protein sequence ID" value="BAB43238.1"/>
    <property type="molecule type" value="Genomic_DNA"/>
</dbReference>
<dbReference type="EMBL" id="BA000018">
    <property type="protein sequence ID" value="BAB43692.1"/>
    <property type="molecule type" value="Genomic_DNA"/>
</dbReference>
<dbReference type="RefSeq" id="WP_001557544.1">
    <property type="nucleotide sequence ID" value="NC_002745.2"/>
</dbReference>
<dbReference type="SMR" id="P0A054"/>
<dbReference type="EnsemblBacteria" id="BAB41269">
    <property type="protein sequence ID" value="BAB41269"/>
    <property type="gene ID" value="BAB41269"/>
</dbReference>
<dbReference type="EnsemblBacteria" id="BAB42000">
    <property type="protein sequence ID" value="BAB42000"/>
    <property type="gene ID" value="BAB42000"/>
</dbReference>
<dbReference type="EnsemblBacteria" id="BAB42749">
    <property type="protein sequence ID" value="BAB42749"/>
    <property type="gene ID" value="BAB42749"/>
</dbReference>
<dbReference type="EnsemblBacteria" id="BAB43238">
    <property type="protein sequence ID" value="BAB43238"/>
    <property type="gene ID" value="BAB43238"/>
</dbReference>
<dbReference type="EnsemblBacteria" id="BAB43692">
    <property type="protein sequence ID" value="BAB43692"/>
    <property type="gene ID" value="BAB43692"/>
</dbReference>
<dbReference type="KEGG" id="sau:SA0051"/>
<dbReference type="KEGG" id="sau:SA0763"/>
<dbReference type="KEGG" id="sau:SA1483"/>
<dbReference type="KEGG" id="sau:SA1954"/>
<dbReference type="KEGG" id="sau:SA2387"/>
<dbReference type="HOGENOM" id="CLU_030252_2_0_9"/>
<dbReference type="GO" id="GO:0003677">
    <property type="term" value="F:DNA binding"/>
    <property type="evidence" value="ECO:0007669"/>
    <property type="project" value="UniProtKB-KW"/>
</dbReference>
<dbReference type="GO" id="GO:0015074">
    <property type="term" value="P:DNA integration"/>
    <property type="evidence" value="ECO:0007669"/>
    <property type="project" value="UniProtKB-KW"/>
</dbReference>
<dbReference type="GO" id="GO:0006310">
    <property type="term" value="P:DNA recombination"/>
    <property type="evidence" value="ECO:0007669"/>
    <property type="project" value="UniProtKB-KW"/>
</dbReference>
<dbReference type="CDD" id="cd01187">
    <property type="entry name" value="INT_tnpB_C_Tn554"/>
    <property type="match status" value="1"/>
</dbReference>
<dbReference type="Gene3D" id="1.10.150.130">
    <property type="match status" value="1"/>
</dbReference>
<dbReference type="Gene3D" id="1.10.443.10">
    <property type="entry name" value="Intergrase catalytic core"/>
    <property type="match status" value="1"/>
</dbReference>
<dbReference type="InterPro" id="IPR044068">
    <property type="entry name" value="CB"/>
</dbReference>
<dbReference type="InterPro" id="IPR011010">
    <property type="entry name" value="DNA_brk_join_enz"/>
</dbReference>
<dbReference type="InterPro" id="IPR013762">
    <property type="entry name" value="Integrase-like_cat_sf"/>
</dbReference>
<dbReference type="InterPro" id="IPR002104">
    <property type="entry name" value="Integrase_catalytic"/>
</dbReference>
<dbReference type="InterPro" id="IPR010998">
    <property type="entry name" value="Integrase_recombinase_N"/>
</dbReference>
<dbReference type="InterPro" id="IPR050090">
    <property type="entry name" value="Tyrosine_recombinase_XerCD"/>
</dbReference>
<dbReference type="PANTHER" id="PTHR30349">
    <property type="entry name" value="PHAGE INTEGRASE-RELATED"/>
    <property type="match status" value="1"/>
</dbReference>
<dbReference type="Pfam" id="PF00589">
    <property type="entry name" value="Phage_integrase"/>
    <property type="match status" value="1"/>
</dbReference>
<dbReference type="SUPFAM" id="SSF56349">
    <property type="entry name" value="DNA breaking-rejoining enzymes"/>
    <property type="match status" value="1"/>
</dbReference>
<dbReference type="PROSITE" id="PS51900">
    <property type="entry name" value="CB"/>
    <property type="match status" value="1"/>
</dbReference>
<dbReference type="PROSITE" id="PS51898">
    <property type="entry name" value="TYR_RECOMBINASE"/>
    <property type="match status" value="1"/>
</dbReference>
<protein>
    <recommendedName>
        <fullName>Transposase B from transposon Tn554</fullName>
    </recommendedName>
</protein>
<comment type="function">
    <text evidence="1">One of three proteins encoded by transposon Tn554 required for its transposition.</text>
</comment>
<comment type="similarity">
    <text evidence="4">Belongs to the 'phage' integrase family.</text>
</comment>
<evidence type="ECO:0000250" key="1"/>
<evidence type="ECO:0000255" key="2">
    <source>
        <dbReference type="PROSITE-ProRule" id="PRU01246"/>
    </source>
</evidence>
<evidence type="ECO:0000255" key="3">
    <source>
        <dbReference type="PROSITE-ProRule" id="PRU01248"/>
    </source>
</evidence>
<evidence type="ECO:0000305" key="4"/>